<gene>
    <name evidence="1" type="primary">pheT</name>
    <name type="ordered locus">rrnAC2967</name>
</gene>
<organism>
    <name type="scientific">Haloarcula marismortui (strain ATCC 43049 / DSM 3752 / JCM 8966 / VKM B-1809)</name>
    <name type="common">Halobacterium marismortui</name>
    <dbReference type="NCBI Taxonomy" id="272569"/>
    <lineage>
        <taxon>Archaea</taxon>
        <taxon>Methanobacteriati</taxon>
        <taxon>Methanobacteriota</taxon>
        <taxon>Stenosarchaea group</taxon>
        <taxon>Halobacteria</taxon>
        <taxon>Halobacteriales</taxon>
        <taxon>Haloarculaceae</taxon>
        <taxon>Haloarcula</taxon>
    </lineage>
</organism>
<name>SYFB_HALMA</name>
<keyword id="KW-0030">Aminoacyl-tRNA synthetase</keyword>
<keyword id="KW-0067">ATP-binding</keyword>
<keyword id="KW-0963">Cytoplasm</keyword>
<keyword id="KW-0436">Ligase</keyword>
<keyword id="KW-0460">Magnesium</keyword>
<keyword id="KW-0479">Metal-binding</keyword>
<keyword id="KW-0547">Nucleotide-binding</keyword>
<keyword id="KW-0648">Protein biosynthesis</keyword>
<keyword id="KW-1185">Reference proteome</keyword>
<proteinExistence type="inferred from homology"/>
<protein>
    <recommendedName>
        <fullName evidence="1">Phenylalanine--tRNA ligase beta subunit</fullName>
        <ecNumber evidence="1">6.1.1.20</ecNumber>
    </recommendedName>
    <alternativeName>
        <fullName evidence="1">Phenylalanyl-tRNA synthetase beta subunit</fullName>
        <shortName evidence="1">PheRS</shortName>
    </alternativeName>
</protein>
<comment type="catalytic activity">
    <reaction evidence="1">
        <text>tRNA(Phe) + L-phenylalanine + ATP = L-phenylalanyl-tRNA(Phe) + AMP + diphosphate + H(+)</text>
        <dbReference type="Rhea" id="RHEA:19413"/>
        <dbReference type="Rhea" id="RHEA-COMP:9668"/>
        <dbReference type="Rhea" id="RHEA-COMP:9699"/>
        <dbReference type="ChEBI" id="CHEBI:15378"/>
        <dbReference type="ChEBI" id="CHEBI:30616"/>
        <dbReference type="ChEBI" id="CHEBI:33019"/>
        <dbReference type="ChEBI" id="CHEBI:58095"/>
        <dbReference type="ChEBI" id="CHEBI:78442"/>
        <dbReference type="ChEBI" id="CHEBI:78531"/>
        <dbReference type="ChEBI" id="CHEBI:456215"/>
        <dbReference type="EC" id="6.1.1.20"/>
    </reaction>
</comment>
<comment type="cofactor">
    <cofactor evidence="1">
        <name>Mg(2+)</name>
        <dbReference type="ChEBI" id="CHEBI:18420"/>
    </cofactor>
</comment>
<comment type="subunit">
    <text evidence="1">Tetramer of two alpha and two beta subunits.</text>
</comment>
<comment type="subcellular location">
    <subcellularLocation>
        <location evidence="1">Cytoplasm</location>
    </subcellularLocation>
</comment>
<comment type="similarity">
    <text evidence="1">Belongs to the phenylalanyl-tRNA synthetase beta subunit family. Type 2 subfamily.</text>
</comment>
<evidence type="ECO:0000255" key="1">
    <source>
        <dbReference type="HAMAP-Rule" id="MF_00284"/>
    </source>
</evidence>
<sequence>MPVVDVDPDELRYLTGHSEKDDDELKSDLFNLGLEFEGWTEDDEFQLEFAPDRLDRLSVEGVARSLRYHYGDDRGVEIPNTNSADWTIEVEDQPDERPYVTGAIVRGLDMDEAALESLIQLQEKLHATMGRKRAKGAIGVHDLTMLKGDSVTDETGKSITYTSADPDEATFVPLDADAEMTPSEVMASHETGQTYGDLVADFDRVPAIYDAIGLFSFPPVINGRRTEVSVDSRDLFIEMTGTNQWTIDHMCNIVCYALAARGGQVEKVDVSYADDAPGEYAGKTLERPDFSVRTKTVTHDRIESILGVSLDSREVVDYAERAGLDATETESDDGVAYDVEVPPYRVDVIHPLDIIDDIGRALGFNSLEPTYPDVSTVGGRHERSRLEDAARDALVGLGFEDLLNFHMTNEVENFERMNLSTPEAEDGNDADTVGLADPVTIQEPYSEDYTILRTWALPSIMMVLENNTHRSYPQDLAEIGLAAGLDDSENTGVAEHRTVAAALARTDASYEDAKARLQALADAFDKDLETPPTTHPSFIGGRAAEVVLDGESVGVIGEIHPKVLVEHDLELPVAAFEFRLDALA</sequence>
<feature type="chain" id="PRO_0000259371" description="Phenylalanine--tRNA ligase beta subunit">
    <location>
        <begin position="1"/>
        <end position="584"/>
    </location>
</feature>
<feature type="domain" description="B5" evidence="1">
    <location>
        <begin position="290"/>
        <end position="369"/>
    </location>
</feature>
<feature type="binding site" evidence="1">
    <location>
        <position position="347"/>
    </location>
    <ligand>
        <name>Mg(2+)</name>
        <dbReference type="ChEBI" id="CHEBI:18420"/>
        <note>shared with alpha subunit</note>
    </ligand>
</feature>
<feature type="binding site" evidence="1">
    <location>
        <position position="353"/>
    </location>
    <ligand>
        <name>Mg(2+)</name>
        <dbReference type="ChEBI" id="CHEBI:18420"/>
        <note>shared with alpha subunit</note>
    </ligand>
</feature>
<feature type="binding site" evidence="1">
    <location>
        <position position="356"/>
    </location>
    <ligand>
        <name>Mg(2+)</name>
        <dbReference type="ChEBI" id="CHEBI:18420"/>
        <note>shared with alpha subunit</note>
    </ligand>
</feature>
<feature type="binding site" evidence="1">
    <location>
        <position position="357"/>
    </location>
    <ligand>
        <name>Mg(2+)</name>
        <dbReference type="ChEBI" id="CHEBI:18420"/>
        <note>shared with alpha subunit</note>
    </ligand>
</feature>
<accession>Q5UYF3</accession>
<reference key="1">
    <citation type="journal article" date="2004" name="Genome Res.">
        <title>Genome sequence of Haloarcula marismortui: a halophilic archaeon from the Dead Sea.</title>
        <authorList>
            <person name="Baliga N.S."/>
            <person name="Bonneau R."/>
            <person name="Facciotti M.T."/>
            <person name="Pan M."/>
            <person name="Glusman G."/>
            <person name="Deutsch E.W."/>
            <person name="Shannon P."/>
            <person name="Chiu Y."/>
            <person name="Weng R.S."/>
            <person name="Gan R.R."/>
            <person name="Hung P."/>
            <person name="Date S.V."/>
            <person name="Marcotte E."/>
            <person name="Hood L."/>
            <person name="Ng W.V."/>
        </authorList>
    </citation>
    <scope>NUCLEOTIDE SEQUENCE [LARGE SCALE GENOMIC DNA]</scope>
    <source>
        <strain>ATCC 43049 / DSM 3752 / JCM 8966 / VKM B-1809</strain>
    </source>
</reference>
<dbReference type="EC" id="6.1.1.20" evidence="1"/>
<dbReference type="EMBL" id="AY596297">
    <property type="protein sequence ID" value="AAV47700.1"/>
    <property type="molecule type" value="Genomic_DNA"/>
</dbReference>
<dbReference type="RefSeq" id="WP_011224540.1">
    <property type="nucleotide sequence ID" value="NC_006396.1"/>
</dbReference>
<dbReference type="SMR" id="Q5UYF3"/>
<dbReference type="STRING" id="272569.rrnAC2967"/>
<dbReference type="PaxDb" id="272569-rrnAC2967"/>
<dbReference type="EnsemblBacteria" id="AAV47700">
    <property type="protein sequence ID" value="AAV47700"/>
    <property type="gene ID" value="rrnAC2967"/>
</dbReference>
<dbReference type="GeneID" id="40153795"/>
<dbReference type="KEGG" id="hma:rrnAC2967"/>
<dbReference type="PATRIC" id="fig|272569.17.peg.3527"/>
<dbReference type="eggNOG" id="arCOG00412">
    <property type="taxonomic scope" value="Archaea"/>
</dbReference>
<dbReference type="HOGENOM" id="CLU_020279_3_0_2"/>
<dbReference type="Proteomes" id="UP000001169">
    <property type="component" value="Chromosome I"/>
</dbReference>
<dbReference type="GO" id="GO:0009328">
    <property type="term" value="C:phenylalanine-tRNA ligase complex"/>
    <property type="evidence" value="ECO:0007669"/>
    <property type="project" value="TreeGrafter"/>
</dbReference>
<dbReference type="GO" id="GO:0005524">
    <property type="term" value="F:ATP binding"/>
    <property type="evidence" value="ECO:0007669"/>
    <property type="project" value="UniProtKB-UniRule"/>
</dbReference>
<dbReference type="GO" id="GO:0000287">
    <property type="term" value="F:magnesium ion binding"/>
    <property type="evidence" value="ECO:0007669"/>
    <property type="project" value="InterPro"/>
</dbReference>
<dbReference type="GO" id="GO:0004826">
    <property type="term" value="F:phenylalanine-tRNA ligase activity"/>
    <property type="evidence" value="ECO:0007669"/>
    <property type="project" value="UniProtKB-UniRule"/>
</dbReference>
<dbReference type="GO" id="GO:0003723">
    <property type="term" value="F:RNA binding"/>
    <property type="evidence" value="ECO:0007669"/>
    <property type="project" value="InterPro"/>
</dbReference>
<dbReference type="GO" id="GO:0006432">
    <property type="term" value="P:phenylalanyl-tRNA aminoacylation"/>
    <property type="evidence" value="ECO:0007669"/>
    <property type="project" value="UniProtKB-UniRule"/>
</dbReference>
<dbReference type="CDD" id="cd00769">
    <property type="entry name" value="PheRS_beta_core"/>
    <property type="match status" value="1"/>
</dbReference>
<dbReference type="FunFam" id="3.50.40.10:FF:000003">
    <property type="entry name" value="Phenylalanine--tRNA ligase beta subunit"/>
    <property type="match status" value="1"/>
</dbReference>
<dbReference type="Gene3D" id="3.30.56.10">
    <property type="match status" value="2"/>
</dbReference>
<dbReference type="Gene3D" id="3.30.930.10">
    <property type="entry name" value="Bira Bifunctional Protein, Domain 2"/>
    <property type="match status" value="1"/>
</dbReference>
<dbReference type="Gene3D" id="3.50.40.10">
    <property type="entry name" value="Phenylalanyl-trna Synthetase, Chain B, domain 3"/>
    <property type="match status" value="1"/>
</dbReference>
<dbReference type="HAMAP" id="MF_00284">
    <property type="entry name" value="Phe_tRNA_synth_beta2"/>
    <property type="match status" value="1"/>
</dbReference>
<dbReference type="InterPro" id="IPR045864">
    <property type="entry name" value="aa-tRNA-synth_II/BPL/LPL"/>
</dbReference>
<dbReference type="InterPro" id="IPR005146">
    <property type="entry name" value="B3/B4_tRNA-bd"/>
</dbReference>
<dbReference type="InterPro" id="IPR009061">
    <property type="entry name" value="DNA-bd_dom_put_sf"/>
</dbReference>
<dbReference type="InterPro" id="IPR045060">
    <property type="entry name" value="Phe-tRNA-ligase_IIc_bsu"/>
</dbReference>
<dbReference type="InterPro" id="IPR004531">
    <property type="entry name" value="Phe-tRNA-synth_IIc_bsu_arc_euk"/>
</dbReference>
<dbReference type="InterPro" id="IPR020825">
    <property type="entry name" value="Phe-tRNA_synthase-like_B3/B4"/>
</dbReference>
<dbReference type="InterPro" id="IPR022918">
    <property type="entry name" value="Phe_tRNA_ligase_beta2_arc"/>
</dbReference>
<dbReference type="InterPro" id="IPR041616">
    <property type="entry name" value="PheRS_beta_core"/>
</dbReference>
<dbReference type="InterPro" id="IPR005147">
    <property type="entry name" value="tRNA_synthase_B5-dom"/>
</dbReference>
<dbReference type="NCBIfam" id="TIGR00471">
    <property type="entry name" value="pheT_arch"/>
    <property type="match status" value="1"/>
</dbReference>
<dbReference type="PANTHER" id="PTHR10947:SF0">
    <property type="entry name" value="PHENYLALANINE--TRNA LIGASE BETA SUBUNIT"/>
    <property type="match status" value="1"/>
</dbReference>
<dbReference type="PANTHER" id="PTHR10947">
    <property type="entry name" value="PHENYLALANYL-TRNA SYNTHETASE BETA CHAIN AND LEUCINE-RICH REPEAT-CONTAINING PROTEIN 47"/>
    <property type="match status" value="1"/>
</dbReference>
<dbReference type="Pfam" id="PF03484">
    <property type="entry name" value="B5"/>
    <property type="match status" value="1"/>
</dbReference>
<dbReference type="Pfam" id="PF17759">
    <property type="entry name" value="tRNA_synthFbeta"/>
    <property type="match status" value="1"/>
</dbReference>
<dbReference type="SMART" id="SM00873">
    <property type="entry name" value="B3_4"/>
    <property type="match status" value="1"/>
</dbReference>
<dbReference type="SMART" id="SM00874">
    <property type="entry name" value="B5"/>
    <property type="match status" value="1"/>
</dbReference>
<dbReference type="SUPFAM" id="SSF55681">
    <property type="entry name" value="Class II aaRS and biotin synthetases"/>
    <property type="match status" value="1"/>
</dbReference>
<dbReference type="SUPFAM" id="SSF46955">
    <property type="entry name" value="Putative DNA-binding domain"/>
    <property type="match status" value="2"/>
</dbReference>
<dbReference type="PROSITE" id="PS51483">
    <property type="entry name" value="B5"/>
    <property type="match status" value="1"/>
</dbReference>